<keyword id="KW-0030">Aminoacyl-tRNA synthetase</keyword>
<keyword id="KW-0067">ATP-binding</keyword>
<keyword id="KW-0963">Cytoplasm</keyword>
<keyword id="KW-0436">Ligase</keyword>
<keyword id="KW-0547">Nucleotide-binding</keyword>
<keyword id="KW-0648">Protein biosynthesis</keyword>
<gene>
    <name evidence="1" type="primary">proS</name>
    <name type="ordered locus">CLL_A0217</name>
</gene>
<evidence type="ECO:0000255" key="1">
    <source>
        <dbReference type="HAMAP-Rule" id="MF_01569"/>
    </source>
</evidence>
<reference key="1">
    <citation type="submission" date="2008-04" db="EMBL/GenBank/DDBJ databases">
        <title>Complete sequence of Clostridium botulinum strain Eklund.</title>
        <authorList>
            <person name="Brinkac L.M."/>
            <person name="Brown J.L."/>
            <person name="Bruce D."/>
            <person name="Detter C."/>
            <person name="Munk C."/>
            <person name="Smith L.A."/>
            <person name="Smith T.J."/>
            <person name="Sutton G."/>
            <person name="Brettin T.S."/>
        </authorList>
    </citation>
    <scope>NUCLEOTIDE SEQUENCE [LARGE SCALE GENOMIC DNA]</scope>
    <source>
        <strain>Eklund 17B / Type B</strain>
    </source>
</reference>
<feature type="chain" id="PRO_1000199366" description="Proline--tRNA ligase">
    <location>
        <begin position="1"/>
        <end position="570"/>
    </location>
</feature>
<dbReference type="EC" id="6.1.1.15" evidence="1"/>
<dbReference type="EMBL" id="CP001056">
    <property type="protein sequence ID" value="ACD22388.1"/>
    <property type="molecule type" value="Genomic_DNA"/>
</dbReference>
<dbReference type="SMR" id="B2TIF5"/>
<dbReference type="KEGG" id="cbk:CLL_A0217"/>
<dbReference type="PATRIC" id="fig|935198.13.peg.191"/>
<dbReference type="HOGENOM" id="CLU_016739_0_0_9"/>
<dbReference type="Proteomes" id="UP000001195">
    <property type="component" value="Chromosome"/>
</dbReference>
<dbReference type="GO" id="GO:0005829">
    <property type="term" value="C:cytosol"/>
    <property type="evidence" value="ECO:0007669"/>
    <property type="project" value="TreeGrafter"/>
</dbReference>
<dbReference type="GO" id="GO:0002161">
    <property type="term" value="F:aminoacyl-tRNA deacylase activity"/>
    <property type="evidence" value="ECO:0007669"/>
    <property type="project" value="InterPro"/>
</dbReference>
<dbReference type="GO" id="GO:0005524">
    <property type="term" value="F:ATP binding"/>
    <property type="evidence" value="ECO:0007669"/>
    <property type="project" value="UniProtKB-UniRule"/>
</dbReference>
<dbReference type="GO" id="GO:0140096">
    <property type="term" value="F:catalytic activity, acting on a protein"/>
    <property type="evidence" value="ECO:0007669"/>
    <property type="project" value="UniProtKB-ARBA"/>
</dbReference>
<dbReference type="GO" id="GO:0004827">
    <property type="term" value="F:proline-tRNA ligase activity"/>
    <property type="evidence" value="ECO:0007669"/>
    <property type="project" value="UniProtKB-UniRule"/>
</dbReference>
<dbReference type="GO" id="GO:0016740">
    <property type="term" value="F:transferase activity"/>
    <property type="evidence" value="ECO:0007669"/>
    <property type="project" value="UniProtKB-ARBA"/>
</dbReference>
<dbReference type="GO" id="GO:0006433">
    <property type="term" value="P:prolyl-tRNA aminoacylation"/>
    <property type="evidence" value="ECO:0007669"/>
    <property type="project" value="UniProtKB-UniRule"/>
</dbReference>
<dbReference type="CDD" id="cd04334">
    <property type="entry name" value="ProRS-INS"/>
    <property type="match status" value="1"/>
</dbReference>
<dbReference type="CDD" id="cd00861">
    <property type="entry name" value="ProRS_anticodon_short"/>
    <property type="match status" value="1"/>
</dbReference>
<dbReference type="CDD" id="cd00779">
    <property type="entry name" value="ProRS_core_prok"/>
    <property type="match status" value="1"/>
</dbReference>
<dbReference type="FunFam" id="3.30.930.10:FF:000065">
    <property type="entry name" value="Proline--tRNA ligase"/>
    <property type="match status" value="1"/>
</dbReference>
<dbReference type="FunFam" id="3.30.930.10:FF:000066">
    <property type="entry name" value="Proline--tRNA ligase"/>
    <property type="match status" value="1"/>
</dbReference>
<dbReference type="FunFam" id="3.40.50.800:FF:000011">
    <property type="entry name" value="Proline--tRNA ligase"/>
    <property type="match status" value="1"/>
</dbReference>
<dbReference type="Gene3D" id="3.40.50.800">
    <property type="entry name" value="Anticodon-binding domain"/>
    <property type="match status" value="1"/>
</dbReference>
<dbReference type="Gene3D" id="3.30.930.10">
    <property type="entry name" value="Bira Bifunctional Protein, Domain 2"/>
    <property type="match status" value="2"/>
</dbReference>
<dbReference type="HAMAP" id="MF_01569">
    <property type="entry name" value="Pro_tRNA_synth_type1"/>
    <property type="match status" value="1"/>
</dbReference>
<dbReference type="InterPro" id="IPR002314">
    <property type="entry name" value="aa-tRNA-synt_IIb"/>
</dbReference>
<dbReference type="InterPro" id="IPR006195">
    <property type="entry name" value="aa-tRNA-synth_II"/>
</dbReference>
<dbReference type="InterPro" id="IPR045864">
    <property type="entry name" value="aa-tRNA-synth_II/BPL/LPL"/>
</dbReference>
<dbReference type="InterPro" id="IPR004154">
    <property type="entry name" value="Anticodon-bd"/>
</dbReference>
<dbReference type="InterPro" id="IPR036621">
    <property type="entry name" value="Anticodon-bd_dom_sf"/>
</dbReference>
<dbReference type="InterPro" id="IPR002316">
    <property type="entry name" value="Pro-tRNA-ligase_IIa"/>
</dbReference>
<dbReference type="InterPro" id="IPR004500">
    <property type="entry name" value="Pro-tRNA-synth_IIa_bac-type"/>
</dbReference>
<dbReference type="InterPro" id="IPR023717">
    <property type="entry name" value="Pro-tRNA-Synthase_IIa_type1"/>
</dbReference>
<dbReference type="InterPro" id="IPR050062">
    <property type="entry name" value="Pro-tRNA_synthetase"/>
</dbReference>
<dbReference type="InterPro" id="IPR044140">
    <property type="entry name" value="ProRS_anticodon_short"/>
</dbReference>
<dbReference type="InterPro" id="IPR033730">
    <property type="entry name" value="ProRS_core_prok"/>
</dbReference>
<dbReference type="InterPro" id="IPR036754">
    <property type="entry name" value="YbaK/aa-tRNA-synt-asso_dom_sf"/>
</dbReference>
<dbReference type="InterPro" id="IPR007214">
    <property type="entry name" value="YbaK/aa-tRNA-synth-assoc-dom"/>
</dbReference>
<dbReference type="NCBIfam" id="NF006625">
    <property type="entry name" value="PRK09194.1"/>
    <property type="match status" value="1"/>
</dbReference>
<dbReference type="NCBIfam" id="TIGR00409">
    <property type="entry name" value="proS_fam_II"/>
    <property type="match status" value="1"/>
</dbReference>
<dbReference type="PANTHER" id="PTHR42753">
    <property type="entry name" value="MITOCHONDRIAL RIBOSOME PROTEIN L39/PROLYL-TRNA LIGASE FAMILY MEMBER"/>
    <property type="match status" value="1"/>
</dbReference>
<dbReference type="PANTHER" id="PTHR42753:SF2">
    <property type="entry name" value="PROLINE--TRNA LIGASE"/>
    <property type="match status" value="1"/>
</dbReference>
<dbReference type="Pfam" id="PF03129">
    <property type="entry name" value="HGTP_anticodon"/>
    <property type="match status" value="1"/>
</dbReference>
<dbReference type="Pfam" id="PF00587">
    <property type="entry name" value="tRNA-synt_2b"/>
    <property type="match status" value="1"/>
</dbReference>
<dbReference type="Pfam" id="PF04073">
    <property type="entry name" value="tRNA_edit"/>
    <property type="match status" value="1"/>
</dbReference>
<dbReference type="PIRSF" id="PIRSF001535">
    <property type="entry name" value="ProRS_1"/>
    <property type="match status" value="1"/>
</dbReference>
<dbReference type="PRINTS" id="PR01046">
    <property type="entry name" value="TRNASYNTHPRO"/>
</dbReference>
<dbReference type="SUPFAM" id="SSF52954">
    <property type="entry name" value="Class II aaRS ABD-related"/>
    <property type="match status" value="1"/>
</dbReference>
<dbReference type="SUPFAM" id="SSF55681">
    <property type="entry name" value="Class II aaRS and biotin synthetases"/>
    <property type="match status" value="1"/>
</dbReference>
<dbReference type="SUPFAM" id="SSF55826">
    <property type="entry name" value="YbaK/ProRS associated domain"/>
    <property type="match status" value="1"/>
</dbReference>
<dbReference type="PROSITE" id="PS50862">
    <property type="entry name" value="AA_TRNA_LIGASE_II"/>
    <property type="match status" value="1"/>
</dbReference>
<sequence length="570" mass="63723">MKMSNMLISTLREVPAEAEIDSHKLMLRSGMIRKMASGIYNYMPLGLKALKKVEDIIREEMNEAGAQEFLASAMIPAELWQSSGRWDAYGAEMFRVKDRNERDFCLGPTHEEVFTDIAKNEIKSYKQLPVNLYQIQTKYRDERRPRFGVMRSREFVMKDAYSFDKDQQGLDLSYNKMYEAYVKIFNRCGLDAKCVEADSGAIGGSNSAEFMVKSEVGEDDIVFCTECNYAANIEKATARLEEAEKEELIEVEKVSTPDSRGIDEVSEFLNISSKKTVKTLLYNVDGKIVAVFVRGDREVNEVKVANASNASGDIEMASHEEYMNATGCGIGFAGPIGIKADLILVDKEVKNMCNFVTGANETGYHIKNVNYGRDFEGTIGDYRNVVEGEACPTCGGKLTISRGTEVGHIFKLGTKYSEAMDAKFIAENGKEAPFIMGCYGIGVTRTMASIIEQHNDENGIVWPLAVAPYHVSVIAVNVKDEEQVKIATKLYEDLKSMGVEALLDDRNERAGVKFKDSEIMGIPMRITVGKKIVDGEVEFKLRIGDMEVVKIEDVCQMVKGEFDKNNLKLR</sequence>
<name>SYP_CLOBB</name>
<proteinExistence type="inferred from homology"/>
<organism>
    <name type="scientific">Clostridium botulinum (strain Eklund 17B / Type B)</name>
    <dbReference type="NCBI Taxonomy" id="935198"/>
    <lineage>
        <taxon>Bacteria</taxon>
        <taxon>Bacillati</taxon>
        <taxon>Bacillota</taxon>
        <taxon>Clostridia</taxon>
        <taxon>Eubacteriales</taxon>
        <taxon>Clostridiaceae</taxon>
        <taxon>Clostridium</taxon>
    </lineage>
</organism>
<comment type="function">
    <text evidence="1">Catalyzes the attachment of proline to tRNA(Pro) in a two-step reaction: proline is first activated by ATP to form Pro-AMP and then transferred to the acceptor end of tRNA(Pro). As ProRS can inadvertently accommodate and process non-cognate amino acids such as alanine and cysteine, to avoid such errors it has two additional distinct editing activities against alanine. One activity is designated as 'pretransfer' editing and involves the tRNA(Pro)-independent hydrolysis of activated Ala-AMP. The other activity is designated 'posttransfer' editing and involves deacylation of mischarged Ala-tRNA(Pro). The misacylated Cys-tRNA(Pro) is not edited by ProRS.</text>
</comment>
<comment type="catalytic activity">
    <reaction evidence="1">
        <text>tRNA(Pro) + L-proline + ATP = L-prolyl-tRNA(Pro) + AMP + diphosphate</text>
        <dbReference type="Rhea" id="RHEA:14305"/>
        <dbReference type="Rhea" id="RHEA-COMP:9700"/>
        <dbReference type="Rhea" id="RHEA-COMP:9702"/>
        <dbReference type="ChEBI" id="CHEBI:30616"/>
        <dbReference type="ChEBI" id="CHEBI:33019"/>
        <dbReference type="ChEBI" id="CHEBI:60039"/>
        <dbReference type="ChEBI" id="CHEBI:78442"/>
        <dbReference type="ChEBI" id="CHEBI:78532"/>
        <dbReference type="ChEBI" id="CHEBI:456215"/>
        <dbReference type="EC" id="6.1.1.15"/>
    </reaction>
</comment>
<comment type="subunit">
    <text evidence="1">Homodimer.</text>
</comment>
<comment type="subcellular location">
    <subcellularLocation>
        <location evidence="1">Cytoplasm</location>
    </subcellularLocation>
</comment>
<comment type="domain">
    <text evidence="1">Consists of three domains: the N-terminal catalytic domain, the editing domain and the C-terminal anticodon-binding domain.</text>
</comment>
<comment type="similarity">
    <text evidence="1">Belongs to the class-II aminoacyl-tRNA synthetase family. ProS type 1 subfamily.</text>
</comment>
<protein>
    <recommendedName>
        <fullName evidence="1">Proline--tRNA ligase</fullName>
        <ecNumber evidence="1">6.1.1.15</ecNumber>
    </recommendedName>
    <alternativeName>
        <fullName evidence="1">Prolyl-tRNA synthetase</fullName>
        <shortName evidence="1">ProRS</shortName>
    </alternativeName>
</protein>
<accession>B2TIF5</accession>